<reference key="1">
    <citation type="journal article" date="2004" name="Science">
        <title>The 1.2-megabase genome sequence of Mimivirus.</title>
        <authorList>
            <person name="Raoult D."/>
            <person name="Audic S."/>
            <person name="Robert C."/>
            <person name="Abergel C."/>
            <person name="Renesto P."/>
            <person name="Ogata H."/>
            <person name="La Scola B."/>
            <person name="Susan M."/>
            <person name="Claverie J.-M."/>
        </authorList>
    </citation>
    <scope>NUCLEOTIDE SEQUENCE [LARGE SCALE GENOMIC DNA]</scope>
    <source>
        <strain>Rowbotham-Bradford</strain>
    </source>
</reference>
<comment type="catalytic activity">
    <reaction>
        <text>a 3'end (2'-deoxyribonucleotide 3'-phosphate)-DNA + H2O = a 3'-end 2'-deoxyribonucleotide-DNA + phosphate</text>
        <dbReference type="Rhea" id="RHEA:14113"/>
        <dbReference type="Rhea" id="RHEA-COMP:13863"/>
        <dbReference type="Rhea" id="RHEA-COMP:13864"/>
        <dbReference type="ChEBI" id="CHEBI:15377"/>
        <dbReference type="ChEBI" id="CHEBI:43474"/>
        <dbReference type="ChEBI" id="CHEBI:138147"/>
        <dbReference type="ChEBI" id="CHEBI:138148"/>
        <dbReference type="EC" id="3.1.3.32"/>
    </reaction>
</comment>
<comment type="catalytic activity">
    <reaction>
        <text>a 5'-end dephospho-2'-deoxyribonucleoside-DNA + ATP = a 5'-end 5'-phospho-2'-deoxyribonucleoside-DNA + ADP + H(+)</text>
        <dbReference type="Rhea" id="RHEA:15669"/>
        <dbReference type="Rhea" id="RHEA-COMP:13180"/>
        <dbReference type="Rhea" id="RHEA-COMP:13184"/>
        <dbReference type="ChEBI" id="CHEBI:15378"/>
        <dbReference type="ChEBI" id="CHEBI:30616"/>
        <dbReference type="ChEBI" id="CHEBI:136412"/>
        <dbReference type="ChEBI" id="CHEBI:136416"/>
        <dbReference type="ChEBI" id="CHEBI:456216"/>
        <dbReference type="EC" id="2.7.1.78"/>
    </reaction>
</comment>
<comment type="similarity">
    <text evidence="3">In the N-terminal section; belongs to the DNA 3' phosphatase family.</text>
</comment>
<organism>
    <name type="scientific">Acanthamoeba polyphaga mimivirus</name>
    <name type="common">APMV</name>
    <dbReference type="NCBI Taxonomy" id="212035"/>
    <lineage>
        <taxon>Viruses</taxon>
        <taxon>Varidnaviria</taxon>
        <taxon>Bamfordvirae</taxon>
        <taxon>Nucleocytoviricota</taxon>
        <taxon>Megaviricetes</taxon>
        <taxon>Imitervirales</taxon>
        <taxon>Mimiviridae</taxon>
        <taxon>Megamimivirinae</taxon>
        <taxon>Mimivirus</taxon>
        <taxon>Mimivirus bradfordmassiliense</taxon>
    </lineage>
</organism>
<name>PNKP_MIMIV</name>
<accession>Q5UQD2</accession>
<keyword id="KW-0067">ATP-binding</keyword>
<keyword id="KW-0378">Hydrolase</keyword>
<keyword id="KW-0418">Kinase</keyword>
<keyword id="KW-0511">Multifunctional enzyme</keyword>
<keyword id="KW-0547">Nucleotide-binding</keyword>
<keyword id="KW-1185">Reference proteome</keyword>
<keyword id="KW-0808">Transferase</keyword>
<protein>
    <recommendedName>
        <fullName>Putative bifunctional polynucleotide phosphatase/kinase</fullName>
    </recommendedName>
    <alternativeName>
        <fullName>DNA 5'-kinase/3'-phosphatase</fullName>
    </alternativeName>
    <alternativeName>
        <fullName>Polynucleotide kinase-3'-phosphatase</fullName>
    </alternativeName>
    <domain>
        <recommendedName>
            <fullName>Polynucleotide 3'-phosphatase</fullName>
            <ecNumber>3.1.3.32</ecNumber>
        </recommendedName>
        <alternativeName>
            <fullName>2'(3')-polynucleotidase</fullName>
        </alternativeName>
    </domain>
    <domain>
        <recommendedName>
            <fullName>Polynucleotide 5'-hydroxyl-kinase</fullName>
            <ecNumber>2.7.1.78</ecNumber>
        </recommendedName>
    </domain>
</protein>
<organismHost>
    <name type="scientific">Acanthamoeba polyphaga</name>
    <name type="common">Amoeba</name>
    <dbReference type="NCBI Taxonomy" id="5757"/>
</organismHost>
<sequence>MRYYRITIIRFINKYTKIMDWIESDSYLKGIINNKPKLHDPVRVASFDLDDTLIVRSKKTQKWKLVDSSIKQKIAELIENKYIIIVFTNQGGMSLNKKFDKPLWRKAMDDLVKILTSETDNDFYFAIYVAKKYDIYRKPNIGLWNLMKQDIKDEFNLDSVQISTKSFFCGDAAGRIYPSMFKKKLYPTSKGGDFSDTDRKFALNIGIKFLTPEEFYLDSKNSENLKTNYKLSGVNPTEIIDEIENTKLVNYKFKPRKKEMIVMIGQPGSGKSFFVKNYILPNGYVHINQDKCKTKAKCLSETENALSKGKSVVIDNTNPDVISRMTYTNLAKENNYDHVRAIIMETPDELAKHLNNVRHIYSSGTVPKVTDIAYNIYRKNFVLPQYEENFDKIETVTFYFDKSMLDDPKWKRSFMKFSEYK</sequence>
<evidence type="ECO:0000250" key="1"/>
<evidence type="ECO:0000255" key="2"/>
<evidence type="ECO:0000305" key="3"/>
<dbReference type="EC" id="3.1.3.32"/>
<dbReference type="EC" id="2.7.1.78"/>
<dbReference type="EMBL" id="AY653733">
    <property type="protein sequence ID" value="AAV50735.1"/>
    <property type="molecule type" value="Genomic_DNA"/>
</dbReference>
<dbReference type="SMR" id="Q5UQD2"/>
<dbReference type="KEGG" id="vg:9925093"/>
<dbReference type="OrthoDB" id="6967at10239"/>
<dbReference type="Proteomes" id="UP000001134">
    <property type="component" value="Genome"/>
</dbReference>
<dbReference type="GO" id="GO:0005524">
    <property type="term" value="F:ATP binding"/>
    <property type="evidence" value="ECO:0007669"/>
    <property type="project" value="UniProtKB-KW"/>
</dbReference>
<dbReference type="GO" id="GO:0046404">
    <property type="term" value="F:ATP-dependent polydeoxyribonucleotide 5'-hydroxyl-kinase activity"/>
    <property type="evidence" value="ECO:0007669"/>
    <property type="project" value="RHEA"/>
</dbReference>
<dbReference type="GO" id="GO:0003690">
    <property type="term" value="F:double-stranded DNA binding"/>
    <property type="evidence" value="ECO:0007669"/>
    <property type="project" value="TreeGrafter"/>
</dbReference>
<dbReference type="GO" id="GO:0046403">
    <property type="term" value="F:polynucleotide 3'-phosphatase activity"/>
    <property type="evidence" value="ECO:0007669"/>
    <property type="project" value="UniProtKB-EC"/>
</dbReference>
<dbReference type="GO" id="GO:0006281">
    <property type="term" value="P:DNA repair"/>
    <property type="evidence" value="ECO:0007669"/>
    <property type="project" value="TreeGrafter"/>
</dbReference>
<dbReference type="FunFam" id="3.40.50.300:FF:000737">
    <property type="entry name" value="Bifunctional polynucleotide phosphatase/kinase"/>
    <property type="match status" value="1"/>
</dbReference>
<dbReference type="Gene3D" id="3.40.50.1000">
    <property type="entry name" value="HAD superfamily/HAD-like"/>
    <property type="match status" value="1"/>
</dbReference>
<dbReference type="Gene3D" id="3.40.50.300">
    <property type="entry name" value="P-loop containing nucleotide triphosphate hydrolases"/>
    <property type="match status" value="1"/>
</dbReference>
<dbReference type="InterPro" id="IPR036412">
    <property type="entry name" value="HAD-like_sf"/>
</dbReference>
<dbReference type="InterPro" id="IPR006549">
    <property type="entry name" value="HAD-SF_hydro_IIIA"/>
</dbReference>
<dbReference type="InterPro" id="IPR023214">
    <property type="entry name" value="HAD_sf"/>
</dbReference>
<dbReference type="InterPro" id="IPR027417">
    <property type="entry name" value="P-loop_NTPase"/>
</dbReference>
<dbReference type="InterPro" id="IPR013954">
    <property type="entry name" value="PNK3P"/>
</dbReference>
<dbReference type="NCBIfam" id="TIGR01662">
    <property type="entry name" value="HAD-SF-IIIA"/>
    <property type="match status" value="1"/>
</dbReference>
<dbReference type="PANTHER" id="PTHR12083">
    <property type="entry name" value="BIFUNCTIONAL POLYNUCLEOTIDE PHOSPHATASE/KINASE"/>
    <property type="match status" value="1"/>
</dbReference>
<dbReference type="PANTHER" id="PTHR12083:SF9">
    <property type="entry name" value="BIFUNCTIONAL POLYNUCLEOTIDE PHOSPHATASE_KINASE"/>
    <property type="match status" value="1"/>
</dbReference>
<dbReference type="Pfam" id="PF13671">
    <property type="entry name" value="AAA_33"/>
    <property type="match status" value="1"/>
</dbReference>
<dbReference type="Pfam" id="PF08645">
    <property type="entry name" value="PNK3P"/>
    <property type="match status" value="1"/>
</dbReference>
<dbReference type="SUPFAM" id="SSF56784">
    <property type="entry name" value="HAD-like"/>
    <property type="match status" value="1"/>
</dbReference>
<dbReference type="SUPFAM" id="SSF52540">
    <property type="entry name" value="P-loop containing nucleoside triphosphate hydrolases"/>
    <property type="match status" value="1"/>
</dbReference>
<feature type="chain" id="PRO_0000247288" description="Putative bifunctional polynucleotide phosphatase/kinase">
    <location>
        <begin position="1"/>
        <end position="421"/>
    </location>
</feature>
<feature type="region of interest" description="Phosphatase" evidence="1">
    <location>
        <begin position="25"/>
        <end position="231"/>
    </location>
</feature>
<feature type="region of interest" description="Kinase" evidence="1">
    <location>
        <begin position="235"/>
        <end position="415"/>
    </location>
</feature>
<feature type="binding site" evidence="2">
    <location>
        <begin position="265"/>
        <end position="272"/>
    </location>
    <ligand>
        <name>ATP</name>
        <dbReference type="ChEBI" id="CHEBI:30616"/>
    </ligand>
</feature>
<proteinExistence type="inferred from homology"/>
<gene>
    <name type="ordered locus">MIMI_L469</name>
</gene>